<dbReference type="EMBL" id="M58521">
    <property type="protein sequence ID" value="AAA29974.1"/>
    <property type="molecule type" value="mRNA"/>
</dbReference>
<dbReference type="EMBL" id="X12371">
    <property type="protein sequence ID" value="CAA30932.1"/>
    <property type="molecule type" value="Genomic_DNA"/>
</dbReference>
<dbReference type="PIR" id="A25342">
    <property type="entry name" value="A25342"/>
</dbReference>
<dbReference type="PIR" id="A44848">
    <property type="entry name" value="A44848"/>
</dbReference>
<dbReference type="PIR" id="S02532">
    <property type="entry name" value="S02532"/>
</dbReference>
<dbReference type="SMR" id="P07436"/>
<dbReference type="GO" id="GO:0005737">
    <property type="term" value="C:cytoplasm"/>
    <property type="evidence" value="ECO:0007669"/>
    <property type="project" value="UniProtKB-KW"/>
</dbReference>
<dbReference type="GO" id="GO:0005874">
    <property type="term" value="C:microtubule"/>
    <property type="evidence" value="ECO:0007669"/>
    <property type="project" value="UniProtKB-KW"/>
</dbReference>
<dbReference type="GO" id="GO:0005634">
    <property type="term" value="C:nucleus"/>
    <property type="evidence" value="ECO:0007669"/>
    <property type="project" value="UniProtKB-SubCell"/>
</dbReference>
<dbReference type="GO" id="GO:0005819">
    <property type="term" value="C:spindle"/>
    <property type="evidence" value="ECO:0007669"/>
    <property type="project" value="UniProtKB-SubCell"/>
</dbReference>
<dbReference type="GO" id="GO:0005525">
    <property type="term" value="F:GTP binding"/>
    <property type="evidence" value="ECO:0007669"/>
    <property type="project" value="UniProtKB-KW"/>
</dbReference>
<dbReference type="GO" id="GO:0003924">
    <property type="term" value="F:GTPase activity"/>
    <property type="evidence" value="ECO:0007669"/>
    <property type="project" value="InterPro"/>
</dbReference>
<dbReference type="GO" id="GO:0046872">
    <property type="term" value="F:metal ion binding"/>
    <property type="evidence" value="ECO:0007669"/>
    <property type="project" value="UniProtKB-KW"/>
</dbReference>
<dbReference type="GO" id="GO:0005200">
    <property type="term" value="F:structural constituent of cytoskeleton"/>
    <property type="evidence" value="ECO:0007669"/>
    <property type="project" value="InterPro"/>
</dbReference>
<dbReference type="GO" id="GO:0007017">
    <property type="term" value="P:microtubule-based process"/>
    <property type="evidence" value="ECO:0007669"/>
    <property type="project" value="InterPro"/>
</dbReference>
<dbReference type="CDD" id="cd02187">
    <property type="entry name" value="beta_tubulin"/>
    <property type="match status" value="1"/>
</dbReference>
<dbReference type="FunFam" id="1.10.287.600:FF:000002">
    <property type="entry name" value="Tubulin beta chain"/>
    <property type="match status" value="1"/>
</dbReference>
<dbReference type="FunFam" id="3.30.1330.20:FF:000002">
    <property type="entry name" value="Tubulin beta chain"/>
    <property type="match status" value="1"/>
</dbReference>
<dbReference type="FunFam" id="3.40.50.1440:FF:000003">
    <property type="entry name" value="Tubulin beta chain"/>
    <property type="match status" value="1"/>
</dbReference>
<dbReference type="Gene3D" id="1.10.287.600">
    <property type="entry name" value="Helix hairpin bin"/>
    <property type="match status" value="1"/>
</dbReference>
<dbReference type="Gene3D" id="3.30.1330.20">
    <property type="entry name" value="Tubulin/FtsZ, C-terminal domain"/>
    <property type="match status" value="1"/>
</dbReference>
<dbReference type="Gene3D" id="3.40.50.1440">
    <property type="entry name" value="Tubulin/FtsZ, GTPase domain"/>
    <property type="match status" value="1"/>
</dbReference>
<dbReference type="InterPro" id="IPR013838">
    <property type="entry name" value="Beta-tubulin_BS"/>
</dbReference>
<dbReference type="InterPro" id="IPR002453">
    <property type="entry name" value="Beta_tubulin"/>
</dbReference>
<dbReference type="InterPro" id="IPR008280">
    <property type="entry name" value="Tub_FtsZ_C"/>
</dbReference>
<dbReference type="InterPro" id="IPR000217">
    <property type="entry name" value="Tubulin"/>
</dbReference>
<dbReference type="InterPro" id="IPR037103">
    <property type="entry name" value="Tubulin/FtsZ-like_C"/>
</dbReference>
<dbReference type="InterPro" id="IPR018316">
    <property type="entry name" value="Tubulin/FtsZ_2-layer-sand-dom"/>
</dbReference>
<dbReference type="InterPro" id="IPR036525">
    <property type="entry name" value="Tubulin/FtsZ_GTPase_sf"/>
</dbReference>
<dbReference type="InterPro" id="IPR023123">
    <property type="entry name" value="Tubulin_C"/>
</dbReference>
<dbReference type="InterPro" id="IPR017975">
    <property type="entry name" value="Tubulin_CS"/>
</dbReference>
<dbReference type="InterPro" id="IPR003008">
    <property type="entry name" value="Tubulin_FtsZ_GTPase"/>
</dbReference>
<dbReference type="PANTHER" id="PTHR11588">
    <property type="entry name" value="TUBULIN"/>
    <property type="match status" value="1"/>
</dbReference>
<dbReference type="Pfam" id="PF00091">
    <property type="entry name" value="Tubulin"/>
    <property type="match status" value="1"/>
</dbReference>
<dbReference type="Pfam" id="PF03953">
    <property type="entry name" value="Tubulin_C"/>
    <property type="match status" value="1"/>
</dbReference>
<dbReference type="PRINTS" id="PR01163">
    <property type="entry name" value="BETATUBULIN"/>
</dbReference>
<dbReference type="PRINTS" id="PR01161">
    <property type="entry name" value="TUBULIN"/>
</dbReference>
<dbReference type="SMART" id="SM00864">
    <property type="entry name" value="Tubulin"/>
    <property type="match status" value="1"/>
</dbReference>
<dbReference type="SMART" id="SM00865">
    <property type="entry name" value="Tubulin_C"/>
    <property type="match status" value="1"/>
</dbReference>
<dbReference type="SUPFAM" id="SSF55307">
    <property type="entry name" value="Tubulin C-terminal domain-like"/>
    <property type="match status" value="1"/>
</dbReference>
<dbReference type="SUPFAM" id="SSF52490">
    <property type="entry name" value="Tubulin nucleotide-binding domain-like"/>
    <property type="match status" value="1"/>
</dbReference>
<dbReference type="PROSITE" id="PS00227">
    <property type="entry name" value="TUBULIN"/>
    <property type="match status" value="1"/>
</dbReference>
<dbReference type="PROSITE" id="PS00228">
    <property type="entry name" value="TUBULIN_B_AUTOREG"/>
    <property type="match status" value="1"/>
</dbReference>
<organism>
    <name type="scientific">Physarum polycephalum</name>
    <name type="common">Slime mold</name>
    <dbReference type="NCBI Taxonomy" id="5791"/>
    <lineage>
        <taxon>Eukaryota</taxon>
        <taxon>Amoebozoa</taxon>
        <taxon>Evosea</taxon>
        <taxon>Eumycetozoa</taxon>
        <taxon>Myxogastria</taxon>
        <taxon>Myxogastromycetidae</taxon>
        <taxon>Physariida</taxon>
        <taxon>Physaraceae</taxon>
        <taxon>Physarum</taxon>
    </lineage>
</organism>
<gene>
    <name type="primary">BETA</name>
</gene>
<gene>
    <name type="primary">BETB</name>
</gene>
<reference key="1">
    <citation type="submission" date="2000-03" db="EMBL/GenBank/DDBJ databases">
        <authorList>
            <person name="Paul E.C.A."/>
            <person name="Buchschacher G.L. Jr."/>
            <person name="Cunningham D.B."/>
            <person name="Dove W.F."/>
            <person name="Burland T.G."/>
        </authorList>
    </citation>
    <scope>NUCLEOTIDE SEQUENCE</scope>
    <source>
        <strain>LU352</strain>
    </source>
</reference>
<reference key="2">
    <citation type="journal article" date="1992" name="J. Gen. Microbiol.">
        <title>Preferential expression of one beta-tubulin gene during flagellate development in Physarum.</title>
        <authorList>
            <person name="Paul E.C.A."/>
            <person name="Buchschacher G.L. Jr."/>
            <person name="Cunningham D.B."/>
            <person name="Dove W.F."/>
            <person name="Burland T.G."/>
        </authorList>
    </citation>
    <scope>NUCLEOTIDE SEQUENCE [MRNA] OF 1-445</scope>
    <source>
        <strain>LU352</strain>
    </source>
</reference>
<reference key="3">
    <citation type="journal article" date="1988" name="Eur. J. Biochem.">
        <title>Cloning and expression of a beta tubulin gene of Physarum polycephalum.</title>
        <authorList>
            <person name="Werenskiold A.K."/>
            <person name="Poetsch B."/>
            <person name="Haugli F."/>
        </authorList>
    </citation>
    <scope>NUCLEOTIDE SEQUENCE [GENOMIC DNA] OF 4-207</scope>
    <source>
        <strain>CL</strain>
    </source>
</reference>
<reference key="4">
    <citation type="journal article" date="1986" name="Eur. J. Biochem.">
        <title>Amino-acid sequence data of beta-tubulin from Physarum polycephalum myxamoebae.</title>
        <authorList>
            <person name="Singhofer-Wowra M."/>
            <person name="Clayton L."/>
            <person name="Dawson P."/>
            <person name="Gull K."/>
            <person name="Little M."/>
        </authorList>
    </citation>
    <scope>PROTEIN SEQUENCE OF 1-217; 234-262 AND 277-286</scope>
</reference>
<comment type="function">
    <text>Tubulin is the major constituent of microtubules, a cylinder consisting of laterally associated linear protofilaments composed of alpha- and beta-tubulin heterodimers. Microtubules grow by the addition of GTP-tubulin dimers to the microtubule end, where a stabilizing cap forms. Below the cap, tubulin dimers are in GDP-bound state, owing to GTPase activity of alpha-tubulin.</text>
</comment>
<comment type="cofactor">
    <cofactor evidence="1">
        <name>Mg(2+)</name>
        <dbReference type="ChEBI" id="CHEBI:18420"/>
    </cofactor>
</comment>
<comment type="subunit">
    <text>Dimer of alpha and beta chains. A typical microtubule is a hollow water-filled tube with an outer diameter of 25 nm and an inner diameter of 15 nM. Alpha-beta heterodimers associate head-to-tail to form protofilaments running lengthwise along the microtubule wall with the beta-tubulin subunit facing the microtubule plus end conferring a structural polarity. Microtubules usually have 13 protofilaments but different protofilament numbers can be found in some organisms and specialized cells.</text>
</comment>
<comment type="subcellular location">
    <subcellularLocation>
        <location>Cytoplasm</location>
        <location>Cytoskeleton</location>
        <location>Spindle</location>
    </subcellularLocation>
    <subcellularLocation>
        <location>Nucleus</location>
    </subcellularLocation>
    <text>Mitosis in the slime mold Plasmodium differs from the process in many eukaryotes. The tubulin chains must be transported to the nuclei for intranuclear assembly of the spindle.</text>
</comment>
<comment type="developmental stage">
    <text>BetA is preferentially expressed in flagellate and BetB in amoeba.</text>
</comment>
<comment type="similarity">
    <text evidence="4">Belongs to the tubulin family.</text>
</comment>
<name>TBB1_PHYPO</name>
<sequence length="467" mass="52134">MREIVHIQAGQCGNQIGAKFWEVISDEHGIDPTGSYHGESDLQLERINVYYNEATGGKYVPRAVLVDLEPGTMDSVRAGPFGQIFRPDNFVFGQTGAGNNWAKGHYTEGAELIDSVLDVVRKEAESCDCLQGFQIAHSLGGGTGSGMGTLLISKIREEYPDRMMCTFSVVPSPKVSDTVVEPYNATLSVHQLVENADEVMCIDNEALYDISFRTLKLTTPTYGDLNHLVSAVMSGITCCLRFPGQLNSDLRKLAVNLIPFPRLHFFLVGFAPLTSRGSVGYRSLTVPELTQQMFDAKNMMAASDPRHGRYLTASAMFRGRMSTKEVDEQMLNVQNKNSSYFVEWIPNNIKSSVCDIPPKGLKMAVTFIGNSTAIQELFKRVSEQFTAMFRRKAFLHWYTGEGMDEMEFTEAESNMNDLVSEYQQYQDATIDDEEGGEEEEGGAEEEARQRKHYVIDYVPSVCVILIR</sequence>
<protein>
    <recommendedName>
        <fullName>Tubulin beta-1 chain</fullName>
    </recommendedName>
    <alternativeName>
        <fullName>Beta-1-tubulin</fullName>
    </alternativeName>
</protein>
<feature type="chain" id="PRO_0000048309" description="Tubulin beta-1 chain">
    <location>
        <begin position="1"/>
        <end position="467"/>
    </location>
</feature>
<feature type="region of interest" description="Disordered" evidence="3">
    <location>
        <begin position="429"/>
        <end position="448"/>
    </location>
</feature>
<feature type="compositionally biased region" description="Acidic residues" evidence="3">
    <location>
        <begin position="429"/>
        <end position="444"/>
    </location>
</feature>
<feature type="binding site" evidence="2">
    <location>
        <position position="11"/>
    </location>
    <ligand>
        <name>GTP</name>
        <dbReference type="ChEBI" id="CHEBI:37565"/>
    </ligand>
</feature>
<feature type="binding site" evidence="1">
    <location>
        <position position="69"/>
    </location>
    <ligand>
        <name>GTP</name>
        <dbReference type="ChEBI" id="CHEBI:37565"/>
    </ligand>
</feature>
<feature type="binding site" evidence="1">
    <location>
        <position position="69"/>
    </location>
    <ligand>
        <name>Mg(2+)</name>
        <dbReference type="ChEBI" id="CHEBI:18420"/>
    </ligand>
</feature>
<feature type="binding site" evidence="2">
    <location>
        <position position="138"/>
    </location>
    <ligand>
        <name>GTP</name>
        <dbReference type="ChEBI" id="CHEBI:37565"/>
    </ligand>
</feature>
<feature type="binding site" evidence="2">
    <location>
        <position position="142"/>
    </location>
    <ligand>
        <name>GTP</name>
        <dbReference type="ChEBI" id="CHEBI:37565"/>
    </ligand>
</feature>
<feature type="binding site" evidence="2">
    <location>
        <position position="143"/>
    </location>
    <ligand>
        <name>GTP</name>
        <dbReference type="ChEBI" id="CHEBI:37565"/>
    </ligand>
</feature>
<feature type="binding site" evidence="2">
    <location>
        <position position="144"/>
    </location>
    <ligand>
        <name>GTP</name>
        <dbReference type="ChEBI" id="CHEBI:37565"/>
    </ligand>
</feature>
<feature type="binding site" evidence="2">
    <location>
        <position position="204"/>
    </location>
    <ligand>
        <name>GTP</name>
        <dbReference type="ChEBI" id="CHEBI:37565"/>
    </ligand>
</feature>
<feature type="binding site" evidence="2">
    <location>
        <position position="226"/>
    </location>
    <ligand>
        <name>GTP</name>
        <dbReference type="ChEBI" id="CHEBI:37565"/>
    </ligand>
</feature>
<feature type="sequence variant" description="In BETB.">
    <original>E</original>
    <variation>D</variation>
    <location>
        <position position="39"/>
    </location>
</feature>
<feature type="sequence variant" description="In BETB.">
    <original>S</original>
    <variation>A</variation>
    <location>
        <position position="283"/>
    </location>
</feature>
<feature type="sequence conflict" description="In Ref. 4; AA sequence." evidence="4" ref="4">
    <original>C</original>
    <variation>D</variation>
    <location>
        <position position="165"/>
    </location>
</feature>
<feature type="sequence conflict" description="In Ref. 4; AA sequence." evidence="4" ref="4">
    <original>A</original>
    <variation>T</variation>
    <location>
        <position position="196"/>
    </location>
</feature>
<feature type="sequence conflict" description="In Ref. 4; AA sequence." evidence="4" ref="4">
    <original>C</original>
    <variation>S</variation>
    <location>
        <position position="238"/>
    </location>
</feature>
<keyword id="KW-0963">Cytoplasm</keyword>
<keyword id="KW-0206">Cytoskeleton</keyword>
<keyword id="KW-0903">Direct protein sequencing</keyword>
<keyword id="KW-0342">GTP-binding</keyword>
<keyword id="KW-0460">Magnesium</keyword>
<keyword id="KW-0479">Metal-binding</keyword>
<keyword id="KW-0493">Microtubule</keyword>
<keyword id="KW-0547">Nucleotide-binding</keyword>
<keyword id="KW-0539">Nucleus</keyword>
<accession>P07436</accession>
<evidence type="ECO:0000250" key="1">
    <source>
        <dbReference type="UniProtKB" id="P68363"/>
    </source>
</evidence>
<evidence type="ECO:0000250" key="2">
    <source>
        <dbReference type="UniProtKB" id="Q13509"/>
    </source>
</evidence>
<evidence type="ECO:0000256" key="3">
    <source>
        <dbReference type="SAM" id="MobiDB-lite"/>
    </source>
</evidence>
<evidence type="ECO:0000305" key="4"/>
<proteinExistence type="evidence at protein level"/>